<evidence type="ECO:0000255" key="1"/>
<evidence type="ECO:0000269" key="2">
    <source>
    </source>
</evidence>
<evidence type="ECO:0000269" key="3">
    <source>
    </source>
</evidence>
<evidence type="ECO:0000305" key="4"/>
<keyword id="KW-0025">Alternative splicing</keyword>
<keyword id="KW-1015">Disulfide bond</keyword>
<keyword id="KW-0939">Gibberellin signaling pathway</keyword>
<keyword id="KW-1185">Reference proteome</keyword>
<keyword id="KW-0964">Secreted</keyword>
<keyword id="KW-0732">Signal</keyword>
<organism>
    <name type="scientific">Arabidopsis thaliana</name>
    <name type="common">Mouse-ear cress</name>
    <dbReference type="NCBI Taxonomy" id="3702"/>
    <lineage>
        <taxon>Eukaryota</taxon>
        <taxon>Viridiplantae</taxon>
        <taxon>Streptophyta</taxon>
        <taxon>Embryophyta</taxon>
        <taxon>Tracheophyta</taxon>
        <taxon>Spermatophyta</taxon>
        <taxon>Magnoliopsida</taxon>
        <taxon>eudicotyledons</taxon>
        <taxon>Gunneridae</taxon>
        <taxon>Pentapetalae</taxon>
        <taxon>rosids</taxon>
        <taxon>malvids</taxon>
        <taxon>Brassicales</taxon>
        <taxon>Brassicaceae</taxon>
        <taxon>Camelineae</taxon>
        <taxon>Arabidopsis</taxon>
    </lineage>
</organism>
<sequence>MAISKALIASLLISLLVLQLVQADVENSQKKNGYAKKIDCGSACVARCRLSRRPRLCHRACGTCCYRCNCVPPGTYGNYDKCQCYASLTTHGGRRKCP</sequence>
<feature type="signal peptide" evidence="1">
    <location>
        <begin position="1"/>
        <end position="23"/>
    </location>
</feature>
<feature type="chain" id="PRO_0000021322" description="Gibberellin-regulated protein 1">
    <location>
        <begin position="24"/>
        <end position="98"/>
    </location>
</feature>
<feature type="sequence conflict" description="In Ref. 1; AAB06310." evidence="4" ref="1">
    <original>N</original>
    <variation>S</variation>
    <location>
        <position position="27"/>
    </location>
</feature>
<dbReference type="EMBL" id="U11766">
    <property type="protein sequence ID" value="AAB06310.1"/>
    <property type="molecule type" value="mRNA"/>
</dbReference>
<dbReference type="EMBL" id="AC006434">
    <property type="protein sequence ID" value="AAF87108.1"/>
    <property type="status" value="ALT_SEQ"/>
    <property type="molecule type" value="Genomic_DNA"/>
</dbReference>
<dbReference type="EMBL" id="CP002684">
    <property type="protein sequence ID" value="AEE35754.1"/>
    <property type="molecule type" value="Genomic_DNA"/>
</dbReference>
<dbReference type="EMBL" id="AF462801">
    <property type="protein sequence ID" value="AAL58896.1"/>
    <property type="molecule type" value="mRNA"/>
</dbReference>
<dbReference type="EMBL" id="Z29940">
    <property type="protein sequence ID" value="CAA82842.1"/>
    <property type="molecule type" value="mRNA"/>
</dbReference>
<dbReference type="PIR" id="A96787">
    <property type="entry name" value="A96787"/>
</dbReference>
<dbReference type="PIR" id="S60229">
    <property type="entry name" value="S60229"/>
</dbReference>
<dbReference type="RefSeq" id="NP_565116.1">
    <molecule id="P46689-1"/>
    <property type="nucleotide sequence ID" value="NM_106225.5"/>
</dbReference>
<dbReference type="SMR" id="P46689"/>
<dbReference type="BioGRID" id="29127">
    <property type="interactions" value="3"/>
</dbReference>
<dbReference type="FunCoup" id="P46689">
    <property type="interactions" value="45"/>
</dbReference>
<dbReference type="IntAct" id="P46689">
    <property type="interactions" value="3"/>
</dbReference>
<dbReference type="STRING" id="3702.P46689"/>
<dbReference type="PaxDb" id="3702-AT1G75750.1"/>
<dbReference type="ProteomicsDB" id="228900">
    <molecule id="P46689-1"/>
</dbReference>
<dbReference type="EnsemblPlants" id="AT1G75750.1">
    <molecule id="P46689-1"/>
    <property type="protein sequence ID" value="AT1G75750.1"/>
    <property type="gene ID" value="AT1G75750"/>
</dbReference>
<dbReference type="GeneID" id="843908"/>
<dbReference type="Gramene" id="AT1G75750.1">
    <molecule id="P46689-1"/>
    <property type="protein sequence ID" value="AT1G75750.1"/>
    <property type="gene ID" value="AT1G75750"/>
</dbReference>
<dbReference type="KEGG" id="ath:AT1G75750"/>
<dbReference type="Araport" id="AT1G75750"/>
<dbReference type="TAIR" id="AT1G75750">
    <property type="gene designation" value="GASA1"/>
</dbReference>
<dbReference type="eggNOG" id="ENOG502S3Z7">
    <property type="taxonomic scope" value="Eukaryota"/>
</dbReference>
<dbReference type="InParanoid" id="P46689"/>
<dbReference type="OMA" id="FHTRTLK"/>
<dbReference type="OrthoDB" id="625265at2759"/>
<dbReference type="PhylomeDB" id="P46689"/>
<dbReference type="PRO" id="PR:P46689"/>
<dbReference type="Proteomes" id="UP000006548">
    <property type="component" value="Chromosome 1"/>
</dbReference>
<dbReference type="ExpressionAtlas" id="P46689">
    <property type="expression patterns" value="baseline and differential"/>
</dbReference>
<dbReference type="GO" id="GO:0005576">
    <property type="term" value="C:extracellular region"/>
    <property type="evidence" value="ECO:0007669"/>
    <property type="project" value="UniProtKB-SubCell"/>
</dbReference>
<dbReference type="GO" id="GO:0005739">
    <property type="term" value="C:mitochondrion"/>
    <property type="evidence" value="ECO:0007005"/>
    <property type="project" value="TAIR"/>
</dbReference>
<dbReference type="GO" id="GO:0009505">
    <property type="term" value="C:plant-type cell wall"/>
    <property type="evidence" value="ECO:0007005"/>
    <property type="project" value="TAIR"/>
</dbReference>
<dbReference type="GO" id="GO:0009740">
    <property type="term" value="P:gibberellic acid mediated signaling pathway"/>
    <property type="evidence" value="ECO:0007669"/>
    <property type="project" value="UniProtKB-KW"/>
</dbReference>
<dbReference type="GO" id="GO:0009737">
    <property type="term" value="P:response to abscisic acid"/>
    <property type="evidence" value="ECO:0000314"/>
    <property type="project" value="TAIR"/>
</dbReference>
<dbReference type="GO" id="GO:0009741">
    <property type="term" value="P:response to brassinosteroid"/>
    <property type="evidence" value="ECO:0000315"/>
    <property type="project" value="TAIR"/>
</dbReference>
<dbReference type="GO" id="GO:0009739">
    <property type="term" value="P:response to gibberellin"/>
    <property type="evidence" value="ECO:0000314"/>
    <property type="project" value="TAIR"/>
</dbReference>
<dbReference type="GO" id="GO:0009826">
    <property type="term" value="P:unidimensional cell growth"/>
    <property type="evidence" value="ECO:0000304"/>
    <property type="project" value="TAIR"/>
</dbReference>
<dbReference type="InterPro" id="IPR003854">
    <property type="entry name" value="GASA"/>
</dbReference>
<dbReference type="PANTHER" id="PTHR23201">
    <property type="entry name" value="EXTENSIN, PROLINE-RICH PROTEIN"/>
    <property type="match status" value="1"/>
</dbReference>
<dbReference type="PANTHER" id="PTHR23201:SF2">
    <property type="entry name" value="GIBBERELLIN-REGULATED PROTEIN 1-RELATED"/>
    <property type="match status" value="1"/>
</dbReference>
<dbReference type="Pfam" id="PF02704">
    <property type="entry name" value="GASA"/>
    <property type="match status" value="1"/>
</dbReference>
<reference key="1">
    <citation type="journal article" date="1995" name="Plant Mol. Biol.">
        <title>GASA, a gibberellin-regulated gene family from Arabidopsis thaliana related to the tomato GAST1 gene.</title>
        <authorList>
            <person name="Herzog M."/>
            <person name="Dorne A.-M."/>
            <person name="Grellet F."/>
        </authorList>
    </citation>
    <scope>NUCLEOTIDE SEQUENCE [MRNA]</scope>
    <source>
        <strain>cv. Columbia</strain>
        <tissue>Silique</tissue>
    </source>
</reference>
<reference key="2">
    <citation type="journal article" date="2000" name="Nature">
        <title>Sequence and analysis of chromosome 1 of the plant Arabidopsis thaliana.</title>
        <authorList>
            <person name="Theologis A."/>
            <person name="Ecker J.R."/>
            <person name="Palm C.J."/>
            <person name="Federspiel N.A."/>
            <person name="Kaul S."/>
            <person name="White O."/>
            <person name="Alonso J."/>
            <person name="Altafi H."/>
            <person name="Araujo R."/>
            <person name="Bowman C.L."/>
            <person name="Brooks S.Y."/>
            <person name="Buehler E."/>
            <person name="Chan A."/>
            <person name="Chao Q."/>
            <person name="Chen H."/>
            <person name="Cheuk R.F."/>
            <person name="Chin C.W."/>
            <person name="Chung M.K."/>
            <person name="Conn L."/>
            <person name="Conway A.B."/>
            <person name="Conway A.R."/>
            <person name="Creasy T.H."/>
            <person name="Dewar K."/>
            <person name="Dunn P."/>
            <person name="Etgu P."/>
            <person name="Feldblyum T.V."/>
            <person name="Feng J.-D."/>
            <person name="Fong B."/>
            <person name="Fujii C.Y."/>
            <person name="Gill J.E."/>
            <person name="Goldsmith A.D."/>
            <person name="Haas B."/>
            <person name="Hansen N.F."/>
            <person name="Hughes B."/>
            <person name="Huizar L."/>
            <person name="Hunter J.L."/>
            <person name="Jenkins J."/>
            <person name="Johnson-Hopson C."/>
            <person name="Khan S."/>
            <person name="Khaykin E."/>
            <person name="Kim C.J."/>
            <person name="Koo H.L."/>
            <person name="Kremenetskaia I."/>
            <person name="Kurtz D.B."/>
            <person name="Kwan A."/>
            <person name="Lam B."/>
            <person name="Langin-Hooper S."/>
            <person name="Lee A."/>
            <person name="Lee J.M."/>
            <person name="Lenz C.A."/>
            <person name="Li J.H."/>
            <person name="Li Y.-P."/>
            <person name="Lin X."/>
            <person name="Liu S.X."/>
            <person name="Liu Z.A."/>
            <person name="Luros J.S."/>
            <person name="Maiti R."/>
            <person name="Marziali A."/>
            <person name="Militscher J."/>
            <person name="Miranda M."/>
            <person name="Nguyen M."/>
            <person name="Nierman W.C."/>
            <person name="Osborne B.I."/>
            <person name="Pai G."/>
            <person name="Peterson J."/>
            <person name="Pham P.K."/>
            <person name="Rizzo M."/>
            <person name="Rooney T."/>
            <person name="Rowley D."/>
            <person name="Sakano H."/>
            <person name="Salzberg S.L."/>
            <person name="Schwartz J.R."/>
            <person name="Shinn P."/>
            <person name="Southwick A.M."/>
            <person name="Sun H."/>
            <person name="Tallon L.J."/>
            <person name="Tambunga G."/>
            <person name="Toriumi M.J."/>
            <person name="Town C.D."/>
            <person name="Utterback T."/>
            <person name="Van Aken S."/>
            <person name="Vaysberg M."/>
            <person name="Vysotskaia V.S."/>
            <person name="Walker M."/>
            <person name="Wu D."/>
            <person name="Yu G."/>
            <person name="Fraser C.M."/>
            <person name="Venter J.C."/>
            <person name="Davis R.W."/>
        </authorList>
    </citation>
    <scope>NUCLEOTIDE SEQUENCE [LARGE SCALE GENOMIC DNA]</scope>
    <source>
        <strain>cv. Columbia</strain>
    </source>
</reference>
<reference key="3">
    <citation type="journal article" date="2017" name="Plant J.">
        <title>Araport11: a complete reannotation of the Arabidopsis thaliana reference genome.</title>
        <authorList>
            <person name="Cheng C.Y."/>
            <person name="Krishnakumar V."/>
            <person name="Chan A.P."/>
            <person name="Thibaud-Nissen F."/>
            <person name="Schobel S."/>
            <person name="Town C.D."/>
        </authorList>
    </citation>
    <scope>GENOME REANNOTATION</scope>
    <source>
        <strain>cv. Columbia</strain>
    </source>
</reference>
<reference key="4">
    <citation type="journal article" date="2003" name="Science">
        <title>Empirical analysis of transcriptional activity in the Arabidopsis genome.</title>
        <authorList>
            <person name="Yamada K."/>
            <person name="Lim J."/>
            <person name="Dale J.M."/>
            <person name="Chen H."/>
            <person name="Shinn P."/>
            <person name="Palm C.J."/>
            <person name="Southwick A.M."/>
            <person name="Wu H.C."/>
            <person name="Kim C.J."/>
            <person name="Nguyen M."/>
            <person name="Pham P.K."/>
            <person name="Cheuk R.F."/>
            <person name="Karlin-Newmann G."/>
            <person name="Liu S.X."/>
            <person name="Lam B."/>
            <person name="Sakano H."/>
            <person name="Wu T."/>
            <person name="Yu G."/>
            <person name="Miranda M."/>
            <person name="Quach H.L."/>
            <person name="Tripp M."/>
            <person name="Chang C.H."/>
            <person name="Lee J.M."/>
            <person name="Toriumi M.J."/>
            <person name="Chan M.M."/>
            <person name="Tang C.C."/>
            <person name="Onodera C.S."/>
            <person name="Deng J.M."/>
            <person name="Akiyama K."/>
            <person name="Ansari Y."/>
            <person name="Arakawa T."/>
            <person name="Banh J."/>
            <person name="Banno F."/>
            <person name="Bowser L."/>
            <person name="Brooks S.Y."/>
            <person name="Carninci P."/>
            <person name="Chao Q."/>
            <person name="Choy N."/>
            <person name="Enju A."/>
            <person name="Goldsmith A.D."/>
            <person name="Gurjal M."/>
            <person name="Hansen N.F."/>
            <person name="Hayashizaki Y."/>
            <person name="Johnson-Hopson C."/>
            <person name="Hsuan V.W."/>
            <person name="Iida K."/>
            <person name="Karnes M."/>
            <person name="Khan S."/>
            <person name="Koesema E."/>
            <person name="Ishida J."/>
            <person name="Jiang P.X."/>
            <person name="Jones T."/>
            <person name="Kawai J."/>
            <person name="Kamiya A."/>
            <person name="Meyers C."/>
            <person name="Nakajima M."/>
            <person name="Narusaka M."/>
            <person name="Seki M."/>
            <person name="Sakurai T."/>
            <person name="Satou M."/>
            <person name="Tamse R."/>
            <person name="Vaysberg M."/>
            <person name="Wallender E.K."/>
            <person name="Wong C."/>
            <person name="Yamamura Y."/>
            <person name="Yuan S."/>
            <person name="Shinozaki K."/>
            <person name="Davis R.W."/>
            <person name="Theologis A."/>
            <person name="Ecker J.R."/>
        </authorList>
    </citation>
    <scope>NUCLEOTIDE SEQUENCE [LARGE SCALE MRNA]</scope>
    <source>
        <strain>cv. Columbia</strain>
    </source>
</reference>
<reference key="5">
    <citation type="journal article" date="1996" name="Plant J.">
        <title>Further progress towards a catalogue of all Arabidopsis genes: analysis of a set of 5000 non-redundant ESTs.</title>
        <authorList>
            <person name="Cooke R."/>
            <person name="Raynal M."/>
            <person name="Laudie M."/>
            <person name="Grellet F."/>
            <person name="Delseny M."/>
            <person name="Morris P.-C."/>
            <person name="Guerrier D."/>
            <person name="Giraudat J."/>
            <person name="Quigley F."/>
            <person name="Clabault G."/>
            <person name="Li Y.-F."/>
            <person name="Mache R."/>
            <person name="Krivitzky M."/>
            <person name="Gy I.J.-J."/>
            <person name="Kreis M."/>
            <person name="Lecharny A."/>
            <person name="Parmentier Y."/>
            <person name="Marbach J."/>
            <person name="Fleck J."/>
            <person name="Clement B."/>
            <person name="Philipps G."/>
            <person name="Herve C."/>
            <person name="Bardet C."/>
            <person name="Tremousaygue D."/>
            <person name="Lescure B."/>
            <person name="Lacomme C."/>
            <person name="Roby D."/>
            <person name="Jourjon M.-F."/>
            <person name="Chabrier P."/>
            <person name="Charpenteau J.-L."/>
            <person name="Desprez T."/>
            <person name="Amselem J."/>
            <person name="Chiapello H."/>
            <person name="Hoefte H."/>
        </authorList>
    </citation>
    <scope>NUCLEOTIDE SEQUENCE [LARGE SCALE MRNA] OF 57-98</scope>
    <source>
        <strain>cv. Columbia</strain>
        <tissue>Green siliques</tissue>
    </source>
</reference>
<reference key="6">
    <citation type="journal article" date="2000" name="Plant J.">
        <title>Fusion genetic analysis of gibberellin signaling mutants.</title>
        <authorList>
            <person name="Raventos D."/>
            <person name="Meier C."/>
            <person name="Mattsson O."/>
            <person name="Jensen A.B."/>
            <person name="Mundy J."/>
        </authorList>
    </citation>
    <scope>TISSUE SPECIFICITY</scope>
    <scope>INDUCTION</scope>
</reference>
<reference key="7">
    <citation type="journal article" date="2007" name="Plant Cell Physiol.">
        <title>GASA4, one of the 14-member Arabidopsis GASA family of small polypeptides, regulates flowering and seed development.</title>
        <authorList>
            <person name="Roxrud I."/>
            <person name="Lid S.E."/>
            <person name="Fletcher J.C."/>
            <person name="Schmidt E.D."/>
            <person name="Opsahl-Sorteberg H.G."/>
        </authorList>
    </citation>
    <scope>TISSUE SPECIFICITY</scope>
</reference>
<accession>P46689</accession>
<accession>Q8W114</accession>
<accession>Q9LR14</accession>
<gene>
    <name type="primary">GASA1</name>
    <name type="ordered locus">At1g75750</name>
    <name type="ORF">F10A5.6</name>
    <name type="ORF">F10A5_16</name>
</gene>
<protein>
    <recommendedName>
        <fullName>Gibberellin-regulated protein 1</fullName>
    </recommendedName>
    <alternativeName>
        <fullName>GAST1 protein homolog 1</fullName>
    </alternativeName>
</protein>
<proteinExistence type="evidence at transcript level"/>
<comment type="function">
    <text>Gibberellin-regulated protein that may function in hormonal controlled steps of development such as seed germination, flowering and seed maturation.</text>
</comment>
<comment type="subcellular location">
    <subcellularLocation>
        <location>Secreted</location>
    </subcellularLocation>
</comment>
<comment type="alternative products">
    <event type="alternative splicing"/>
    <isoform>
        <id>P46689-1</id>
        <name>1</name>
        <sequence type="displayed"/>
    </isoform>
    <text>A number of isoforms are produced. According to EST sequences.</text>
</comment>
<comment type="tissue specificity">
    <text evidence="2 3">Expressed in flower buds, style, stamen filaments, vasculature of sepals, flower abscission zone and green siliques. Lower levels seen in the root phloem, cotyledons and vasculature of rosette leaves.</text>
</comment>
<comment type="induction">
    <text evidence="2">By gibberellins. Down-regulated by abscisic acid (ABA).</text>
</comment>
<comment type="PTM">
    <text>Six disulfide bonds may be present.</text>
</comment>
<comment type="similarity">
    <text evidence="4">Belongs to the GASA family.</text>
</comment>
<comment type="sequence caution" evidence="4">
    <conflict type="erroneous gene model prediction">
        <sequence resource="EMBL-CDS" id="AAF87108"/>
    </conflict>
</comment>
<name>GASA1_ARATH</name>